<organism>
    <name type="scientific">Burkholderia cenocepacia (strain ATCC BAA-245 / DSM 16553 / LMG 16656 / NCTC 13227 / J2315 / CF5610)</name>
    <name type="common">Burkholderia cepacia (strain J2315)</name>
    <dbReference type="NCBI Taxonomy" id="216591"/>
    <lineage>
        <taxon>Bacteria</taxon>
        <taxon>Pseudomonadati</taxon>
        <taxon>Pseudomonadota</taxon>
        <taxon>Betaproteobacteria</taxon>
        <taxon>Burkholderiales</taxon>
        <taxon>Burkholderiaceae</taxon>
        <taxon>Burkholderia</taxon>
        <taxon>Burkholderia cepacia complex</taxon>
    </lineage>
</organism>
<keyword id="KW-0004">4Fe-4S</keyword>
<keyword id="KW-0963">Cytoplasm</keyword>
<keyword id="KW-0408">Iron</keyword>
<keyword id="KW-0411">Iron-sulfur</keyword>
<keyword id="KW-0479">Metal-binding</keyword>
<keyword id="KW-0949">S-adenosyl-L-methionine</keyword>
<keyword id="KW-0808">Transferase</keyword>
<keyword id="KW-0819">tRNA processing</keyword>
<proteinExistence type="inferred from homology"/>
<evidence type="ECO:0000255" key="1">
    <source>
        <dbReference type="HAMAP-Rule" id="MF_01864"/>
    </source>
</evidence>
<evidence type="ECO:0000255" key="2">
    <source>
        <dbReference type="PROSITE-ProRule" id="PRU01266"/>
    </source>
</evidence>
<comment type="function">
    <text evidence="1">Catalyzes the methylthiolation of N6-(dimethylallyl)adenosine (i(6)A), leading to the formation of 2-methylthio-N6-(dimethylallyl)adenosine (ms(2)i(6)A) at position 37 in tRNAs that read codons beginning with uridine.</text>
</comment>
<comment type="catalytic activity">
    <reaction evidence="1">
        <text>N(6)-dimethylallyladenosine(37) in tRNA + (sulfur carrier)-SH + AH2 + 2 S-adenosyl-L-methionine = 2-methylsulfanyl-N(6)-dimethylallyladenosine(37) in tRNA + (sulfur carrier)-H + 5'-deoxyadenosine + L-methionine + A + S-adenosyl-L-homocysteine + 2 H(+)</text>
        <dbReference type="Rhea" id="RHEA:37067"/>
        <dbReference type="Rhea" id="RHEA-COMP:10375"/>
        <dbReference type="Rhea" id="RHEA-COMP:10376"/>
        <dbReference type="Rhea" id="RHEA-COMP:14737"/>
        <dbReference type="Rhea" id="RHEA-COMP:14739"/>
        <dbReference type="ChEBI" id="CHEBI:13193"/>
        <dbReference type="ChEBI" id="CHEBI:15378"/>
        <dbReference type="ChEBI" id="CHEBI:17319"/>
        <dbReference type="ChEBI" id="CHEBI:17499"/>
        <dbReference type="ChEBI" id="CHEBI:29917"/>
        <dbReference type="ChEBI" id="CHEBI:57844"/>
        <dbReference type="ChEBI" id="CHEBI:57856"/>
        <dbReference type="ChEBI" id="CHEBI:59789"/>
        <dbReference type="ChEBI" id="CHEBI:64428"/>
        <dbReference type="ChEBI" id="CHEBI:74415"/>
        <dbReference type="ChEBI" id="CHEBI:74417"/>
        <dbReference type="EC" id="2.8.4.3"/>
    </reaction>
</comment>
<comment type="cofactor">
    <cofactor evidence="1">
        <name>[4Fe-4S] cluster</name>
        <dbReference type="ChEBI" id="CHEBI:49883"/>
    </cofactor>
    <text evidence="1">Binds 2 [4Fe-4S] clusters. One cluster is coordinated with 3 cysteines and an exchangeable S-adenosyl-L-methionine.</text>
</comment>
<comment type="subunit">
    <text evidence="1">Monomer.</text>
</comment>
<comment type="subcellular location">
    <subcellularLocation>
        <location evidence="1">Cytoplasm</location>
    </subcellularLocation>
</comment>
<comment type="similarity">
    <text evidence="1">Belongs to the methylthiotransferase family. MiaB subfamily.</text>
</comment>
<accession>B4EBG2</accession>
<feature type="chain" id="PRO_0000374177" description="tRNA-2-methylthio-N(6)-dimethylallyladenosine synthase">
    <location>
        <begin position="1"/>
        <end position="457"/>
    </location>
</feature>
<feature type="domain" description="MTTase N-terminal" evidence="1">
    <location>
        <begin position="3"/>
        <end position="120"/>
    </location>
</feature>
<feature type="domain" description="Radical SAM core" evidence="2">
    <location>
        <begin position="143"/>
        <end position="377"/>
    </location>
</feature>
<feature type="domain" description="TRAM" evidence="1">
    <location>
        <begin position="380"/>
        <end position="447"/>
    </location>
</feature>
<feature type="binding site" evidence="1">
    <location>
        <position position="12"/>
    </location>
    <ligand>
        <name>[4Fe-4S] cluster</name>
        <dbReference type="ChEBI" id="CHEBI:49883"/>
        <label>1</label>
    </ligand>
</feature>
<feature type="binding site" evidence="1">
    <location>
        <position position="49"/>
    </location>
    <ligand>
        <name>[4Fe-4S] cluster</name>
        <dbReference type="ChEBI" id="CHEBI:49883"/>
        <label>1</label>
    </ligand>
</feature>
<feature type="binding site" evidence="1">
    <location>
        <position position="83"/>
    </location>
    <ligand>
        <name>[4Fe-4S] cluster</name>
        <dbReference type="ChEBI" id="CHEBI:49883"/>
        <label>1</label>
    </ligand>
</feature>
<feature type="binding site" evidence="1">
    <location>
        <position position="157"/>
    </location>
    <ligand>
        <name>[4Fe-4S] cluster</name>
        <dbReference type="ChEBI" id="CHEBI:49883"/>
        <label>2</label>
        <note>4Fe-4S-S-AdoMet</note>
    </ligand>
</feature>
<feature type="binding site" evidence="1">
    <location>
        <position position="161"/>
    </location>
    <ligand>
        <name>[4Fe-4S] cluster</name>
        <dbReference type="ChEBI" id="CHEBI:49883"/>
        <label>2</label>
        <note>4Fe-4S-S-AdoMet</note>
    </ligand>
</feature>
<feature type="binding site" evidence="1">
    <location>
        <position position="164"/>
    </location>
    <ligand>
        <name>[4Fe-4S] cluster</name>
        <dbReference type="ChEBI" id="CHEBI:49883"/>
        <label>2</label>
        <note>4Fe-4S-S-AdoMet</note>
    </ligand>
</feature>
<name>MIAB_BURCJ</name>
<protein>
    <recommendedName>
        <fullName evidence="1">tRNA-2-methylthio-N(6)-dimethylallyladenosine synthase</fullName>
        <ecNumber evidence="1">2.8.4.3</ecNumber>
    </recommendedName>
    <alternativeName>
        <fullName evidence="1">(Dimethylallyl)adenosine tRNA methylthiotransferase MiaB</fullName>
    </alternativeName>
    <alternativeName>
        <fullName evidence="1">tRNA-i(6)A37 methylthiotransferase</fullName>
    </alternativeName>
</protein>
<sequence>MTKKVYVKTFGCQMNEYDSDKMVDVLNAAEGLEKTDTPEDADIILFNTCSVREKAQEKVFSDLGRVRELKEAKPGLLIGVGGCVASQEGASIVSRAPYVDLVFGPQTLHRLPQMIDARRASGRAQVDITFPEIEKFDHLPPARVEGPSAFVSIMEGCSKYCSYCVVPYTRGDEVSRPLDDVLTEVAGLADQGVREVTLLGQNVNAYRGALAAGSSEIADFATLIEYVADIPGIERIRYTTSHPKEFTQRLIDTYAKVPKLVNHLHLPVQHGSDRILMAMKRGYTVLEYKSVIRKLRAIRPDLSLSTDMIVGFPGETEDDFDKMMALVHEMGYDTSFSFIYSPRPGTPAANLADDTPRDVKLKRLQHLQATIEENVARISQSMVGKVERILVEGPSRKDPNELAGRTENNRVVNFPAPLASHPRLIGQMIDVKINHAYPHSLRGELVIVSDDASAATH</sequence>
<gene>
    <name evidence="1" type="primary">miaB</name>
    <name type="ordered locus">BceJ2315_09010</name>
    <name type="ORF">BCAL0911</name>
</gene>
<reference key="1">
    <citation type="journal article" date="2009" name="J. Bacteriol.">
        <title>The genome of Burkholderia cenocepacia J2315, an epidemic pathogen of cystic fibrosis patients.</title>
        <authorList>
            <person name="Holden M.T."/>
            <person name="Seth-Smith H.M."/>
            <person name="Crossman L.C."/>
            <person name="Sebaihia M."/>
            <person name="Bentley S.D."/>
            <person name="Cerdeno-Tarraga A.M."/>
            <person name="Thomson N.R."/>
            <person name="Bason N."/>
            <person name="Quail M.A."/>
            <person name="Sharp S."/>
            <person name="Cherevach I."/>
            <person name="Churcher C."/>
            <person name="Goodhead I."/>
            <person name="Hauser H."/>
            <person name="Holroyd N."/>
            <person name="Mungall K."/>
            <person name="Scott P."/>
            <person name="Walker D."/>
            <person name="White B."/>
            <person name="Rose H."/>
            <person name="Iversen P."/>
            <person name="Mil-Homens D."/>
            <person name="Rocha E.P."/>
            <person name="Fialho A.M."/>
            <person name="Baldwin A."/>
            <person name="Dowson C."/>
            <person name="Barrell B.G."/>
            <person name="Govan J.R."/>
            <person name="Vandamme P."/>
            <person name="Hart C.A."/>
            <person name="Mahenthiralingam E."/>
            <person name="Parkhill J."/>
        </authorList>
    </citation>
    <scope>NUCLEOTIDE SEQUENCE [LARGE SCALE GENOMIC DNA]</scope>
    <source>
        <strain>ATCC BAA-245 / DSM 16553 / LMG 16656 / NCTC 13227 / J2315 / CF5610</strain>
    </source>
</reference>
<dbReference type="EC" id="2.8.4.3" evidence="1"/>
<dbReference type="EMBL" id="AM747720">
    <property type="protein sequence ID" value="CAR51217.1"/>
    <property type="molecule type" value="Genomic_DNA"/>
</dbReference>
<dbReference type="RefSeq" id="WP_006486604.1">
    <property type="nucleotide sequence ID" value="NC_011000.1"/>
</dbReference>
<dbReference type="SMR" id="B4EBG2"/>
<dbReference type="GeneID" id="56559275"/>
<dbReference type="KEGG" id="bcj:BCAL0911"/>
<dbReference type="eggNOG" id="COG0621">
    <property type="taxonomic scope" value="Bacteria"/>
</dbReference>
<dbReference type="HOGENOM" id="CLU_018697_2_0_4"/>
<dbReference type="BioCyc" id="BCEN216591:G1G1V-1008-MONOMER"/>
<dbReference type="Proteomes" id="UP000001035">
    <property type="component" value="Chromosome 1"/>
</dbReference>
<dbReference type="GO" id="GO:0005829">
    <property type="term" value="C:cytosol"/>
    <property type="evidence" value="ECO:0007669"/>
    <property type="project" value="TreeGrafter"/>
</dbReference>
<dbReference type="GO" id="GO:0051539">
    <property type="term" value="F:4 iron, 4 sulfur cluster binding"/>
    <property type="evidence" value="ECO:0007669"/>
    <property type="project" value="UniProtKB-UniRule"/>
</dbReference>
<dbReference type="GO" id="GO:0046872">
    <property type="term" value="F:metal ion binding"/>
    <property type="evidence" value="ECO:0007669"/>
    <property type="project" value="UniProtKB-KW"/>
</dbReference>
<dbReference type="GO" id="GO:0035597">
    <property type="term" value="F:N6-isopentenyladenosine methylthiotransferase activity"/>
    <property type="evidence" value="ECO:0007669"/>
    <property type="project" value="TreeGrafter"/>
</dbReference>
<dbReference type="CDD" id="cd01335">
    <property type="entry name" value="Radical_SAM"/>
    <property type="match status" value="1"/>
</dbReference>
<dbReference type="FunFam" id="3.40.50.12160:FF:000001">
    <property type="entry name" value="tRNA-2-methylthio-N(6)-dimethylallyladenosine synthase"/>
    <property type="match status" value="1"/>
</dbReference>
<dbReference type="FunFam" id="3.80.30.20:FF:000001">
    <property type="entry name" value="tRNA-2-methylthio-N(6)-dimethylallyladenosine synthase 2"/>
    <property type="match status" value="1"/>
</dbReference>
<dbReference type="Gene3D" id="3.40.50.12160">
    <property type="entry name" value="Methylthiotransferase, N-terminal domain"/>
    <property type="match status" value="1"/>
</dbReference>
<dbReference type="Gene3D" id="3.80.30.20">
    <property type="entry name" value="tm_1862 like domain"/>
    <property type="match status" value="1"/>
</dbReference>
<dbReference type="HAMAP" id="MF_01864">
    <property type="entry name" value="tRNA_metthiotr_MiaB"/>
    <property type="match status" value="1"/>
</dbReference>
<dbReference type="InterPro" id="IPR006638">
    <property type="entry name" value="Elp3/MiaA/NifB-like_rSAM"/>
</dbReference>
<dbReference type="InterPro" id="IPR005839">
    <property type="entry name" value="Methylthiotransferase"/>
</dbReference>
<dbReference type="InterPro" id="IPR020612">
    <property type="entry name" value="Methylthiotransferase_CS"/>
</dbReference>
<dbReference type="InterPro" id="IPR013848">
    <property type="entry name" value="Methylthiotransferase_N"/>
</dbReference>
<dbReference type="InterPro" id="IPR038135">
    <property type="entry name" value="Methylthiotransferase_N_sf"/>
</dbReference>
<dbReference type="InterPro" id="IPR006463">
    <property type="entry name" value="MiaB_methiolase"/>
</dbReference>
<dbReference type="InterPro" id="IPR007197">
    <property type="entry name" value="rSAM"/>
</dbReference>
<dbReference type="InterPro" id="IPR023404">
    <property type="entry name" value="rSAM_horseshoe"/>
</dbReference>
<dbReference type="InterPro" id="IPR002792">
    <property type="entry name" value="TRAM_dom"/>
</dbReference>
<dbReference type="NCBIfam" id="TIGR01574">
    <property type="entry name" value="miaB-methiolase"/>
    <property type="match status" value="1"/>
</dbReference>
<dbReference type="NCBIfam" id="TIGR00089">
    <property type="entry name" value="MiaB/RimO family radical SAM methylthiotransferase"/>
    <property type="match status" value="1"/>
</dbReference>
<dbReference type="PANTHER" id="PTHR43020">
    <property type="entry name" value="CDK5 REGULATORY SUBUNIT-ASSOCIATED PROTEIN 1"/>
    <property type="match status" value="1"/>
</dbReference>
<dbReference type="PANTHER" id="PTHR43020:SF2">
    <property type="entry name" value="MITOCHONDRIAL TRNA METHYLTHIOTRANSFERASE CDK5RAP1"/>
    <property type="match status" value="1"/>
</dbReference>
<dbReference type="Pfam" id="PF04055">
    <property type="entry name" value="Radical_SAM"/>
    <property type="match status" value="1"/>
</dbReference>
<dbReference type="Pfam" id="PF01938">
    <property type="entry name" value="TRAM"/>
    <property type="match status" value="1"/>
</dbReference>
<dbReference type="Pfam" id="PF00919">
    <property type="entry name" value="UPF0004"/>
    <property type="match status" value="1"/>
</dbReference>
<dbReference type="SFLD" id="SFLDF00273">
    <property type="entry name" value="(dimethylallyl)adenosine_tRNA"/>
    <property type="match status" value="1"/>
</dbReference>
<dbReference type="SFLD" id="SFLDG01082">
    <property type="entry name" value="B12-binding_domain_containing"/>
    <property type="match status" value="1"/>
</dbReference>
<dbReference type="SFLD" id="SFLDG01061">
    <property type="entry name" value="methylthiotransferase"/>
    <property type="match status" value="1"/>
</dbReference>
<dbReference type="SMART" id="SM00729">
    <property type="entry name" value="Elp3"/>
    <property type="match status" value="1"/>
</dbReference>
<dbReference type="SUPFAM" id="SSF102114">
    <property type="entry name" value="Radical SAM enzymes"/>
    <property type="match status" value="1"/>
</dbReference>
<dbReference type="PROSITE" id="PS51449">
    <property type="entry name" value="MTTASE_N"/>
    <property type="match status" value="1"/>
</dbReference>
<dbReference type="PROSITE" id="PS01278">
    <property type="entry name" value="MTTASE_RADICAL"/>
    <property type="match status" value="1"/>
</dbReference>
<dbReference type="PROSITE" id="PS51918">
    <property type="entry name" value="RADICAL_SAM"/>
    <property type="match status" value="1"/>
</dbReference>
<dbReference type="PROSITE" id="PS50926">
    <property type="entry name" value="TRAM"/>
    <property type="match status" value="1"/>
</dbReference>